<organism>
    <name type="scientific">Geobacillus kaustophilus (strain HTA426)</name>
    <dbReference type="NCBI Taxonomy" id="235909"/>
    <lineage>
        <taxon>Bacteria</taxon>
        <taxon>Bacillati</taxon>
        <taxon>Bacillota</taxon>
        <taxon>Bacilli</taxon>
        <taxon>Bacillales</taxon>
        <taxon>Anoxybacillaceae</taxon>
        <taxon>Geobacillus</taxon>
        <taxon>Geobacillus thermoleovorans group</taxon>
    </lineage>
</organism>
<keyword id="KW-0963">Cytoplasm</keyword>
<keyword id="KW-0275">Fatty acid biosynthesis</keyword>
<keyword id="KW-0276">Fatty acid metabolism</keyword>
<keyword id="KW-0444">Lipid biosynthesis</keyword>
<keyword id="KW-0443">Lipid metabolism</keyword>
<keyword id="KW-0596">Phosphopantetheine</keyword>
<keyword id="KW-0597">Phosphoprotein</keyword>
<keyword id="KW-1185">Reference proteome</keyword>
<evidence type="ECO:0000255" key="1">
    <source>
        <dbReference type="HAMAP-Rule" id="MF_01217"/>
    </source>
</evidence>
<evidence type="ECO:0000255" key="2">
    <source>
        <dbReference type="PROSITE-ProRule" id="PRU00258"/>
    </source>
</evidence>
<sequence>MADVLERVTKIIVDRLGVDESQVTLEASFKDDLGADSLDIVELVMELEDEFNMEISDEEAEKIVTVGDAVNYIKSRL</sequence>
<comment type="function">
    <text evidence="1">Carrier of the growing fatty acid chain in fatty acid biosynthesis.</text>
</comment>
<comment type="pathway">
    <text evidence="1">Lipid metabolism; fatty acid biosynthesis.</text>
</comment>
<comment type="subcellular location">
    <subcellularLocation>
        <location evidence="1">Cytoplasm</location>
    </subcellularLocation>
</comment>
<comment type="PTM">
    <text evidence="1">4'-phosphopantetheine is transferred from CoA to a specific serine of apo-ACP by AcpS. This modification is essential for activity because fatty acids are bound in thioester linkage to the sulfhydryl of the prosthetic group.</text>
</comment>
<comment type="similarity">
    <text evidence="1">Belongs to the acyl carrier protein (ACP) family.</text>
</comment>
<protein>
    <recommendedName>
        <fullName evidence="1">Acyl carrier protein</fullName>
        <shortName evidence="1">ACP</shortName>
    </recommendedName>
</protein>
<gene>
    <name evidence="1" type="primary">acpP</name>
    <name type="ordered locus">GK1191</name>
</gene>
<reference key="1">
    <citation type="journal article" date="2004" name="Nucleic Acids Res.">
        <title>Thermoadaptation trait revealed by the genome sequence of thermophilic Geobacillus kaustophilus.</title>
        <authorList>
            <person name="Takami H."/>
            <person name="Takaki Y."/>
            <person name="Chee G.-J."/>
            <person name="Nishi S."/>
            <person name="Shimamura S."/>
            <person name="Suzuki H."/>
            <person name="Matsui S."/>
            <person name="Uchiyama I."/>
        </authorList>
    </citation>
    <scope>NUCLEOTIDE SEQUENCE [LARGE SCALE GENOMIC DNA]</scope>
    <source>
        <strain>HTA426</strain>
    </source>
</reference>
<name>ACP_GEOKA</name>
<dbReference type="EMBL" id="BA000043">
    <property type="protein sequence ID" value="BAD75476.1"/>
    <property type="molecule type" value="Genomic_DNA"/>
</dbReference>
<dbReference type="RefSeq" id="WP_011230691.1">
    <property type="nucleotide sequence ID" value="NC_006510.1"/>
</dbReference>
<dbReference type="SMR" id="Q5L0Q4"/>
<dbReference type="STRING" id="235909.GK1191"/>
<dbReference type="KEGG" id="gka:GK1191"/>
<dbReference type="eggNOG" id="COG0236">
    <property type="taxonomic scope" value="Bacteria"/>
</dbReference>
<dbReference type="HOGENOM" id="CLU_108696_5_3_9"/>
<dbReference type="UniPathway" id="UPA00094"/>
<dbReference type="Proteomes" id="UP000001172">
    <property type="component" value="Chromosome"/>
</dbReference>
<dbReference type="GO" id="GO:0005829">
    <property type="term" value="C:cytosol"/>
    <property type="evidence" value="ECO:0007669"/>
    <property type="project" value="TreeGrafter"/>
</dbReference>
<dbReference type="GO" id="GO:0016020">
    <property type="term" value="C:membrane"/>
    <property type="evidence" value="ECO:0007669"/>
    <property type="project" value="GOC"/>
</dbReference>
<dbReference type="GO" id="GO:0000035">
    <property type="term" value="F:acyl binding"/>
    <property type="evidence" value="ECO:0007669"/>
    <property type="project" value="TreeGrafter"/>
</dbReference>
<dbReference type="GO" id="GO:0000036">
    <property type="term" value="F:acyl carrier activity"/>
    <property type="evidence" value="ECO:0007669"/>
    <property type="project" value="UniProtKB-UniRule"/>
</dbReference>
<dbReference type="GO" id="GO:0009245">
    <property type="term" value="P:lipid A biosynthetic process"/>
    <property type="evidence" value="ECO:0007669"/>
    <property type="project" value="TreeGrafter"/>
</dbReference>
<dbReference type="FunFam" id="1.10.1200.10:FF:000001">
    <property type="entry name" value="Acyl carrier protein"/>
    <property type="match status" value="1"/>
</dbReference>
<dbReference type="Gene3D" id="1.10.1200.10">
    <property type="entry name" value="ACP-like"/>
    <property type="match status" value="1"/>
</dbReference>
<dbReference type="HAMAP" id="MF_01217">
    <property type="entry name" value="Acyl_carrier"/>
    <property type="match status" value="1"/>
</dbReference>
<dbReference type="InterPro" id="IPR003231">
    <property type="entry name" value="ACP"/>
</dbReference>
<dbReference type="InterPro" id="IPR036736">
    <property type="entry name" value="ACP-like_sf"/>
</dbReference>
<dbReference type="InterPro" id="IPR009081">
    <property type="entry name" value="PP-bd_ACP"/>
</dbReference>
<dbReference type="InterPro" id="IPR006162">
    <property type="entry name" value="Ppantetheine_attach_site"/>
</dbReference>
<dbReference type="NCBIfam" id="TIGR00517">
    <property type="entry name" value="acyl_carrier"/>
    <property type="match status" value="1"/>
</dbReference>
<dbReference type="NCBIfam" id="NF002148">
    <property type="entry name" value="PRK00982.1-2"/>
    <property type="match status" value="1"/>
</dbReference>
<dbReference type="NCBIfam" id="NF002149">
    <property type="entry name" value="PRK00982.1-3"/>
    <property type="match status" value="1"/>
</dbReference>
<dbReference type="NCBIfam" id="NF002150">
    <property type="entry name" value="PRK00982.1-4"/>
    <property type="match status" value="1"/>
</dbReference>
<dbReference type="NCBIfam" id="NF002151">
    <property type="entry name" value="PRK00982.1-5"/>
    <property type="match status" value="1"/>
</dbReference>
<dbReference type="PANTHER" id="PTHR20863">
    <property type="entry name" value="ACYL CARRIER PROTEIN"/>
    <property type="match status" value="1"/>
</dbReference>
<dbReference type="PANTHER" id="PTHR20863:SF76">
    <property type="entry name" value="CARRIER DOMAIN-CONTAINING PROTEIN"/>
    <property type="match status" value="1"/>
</dbReference>
<dbReference type="Pfam" id="PF00550">
    <property type="entry name" value="PP-binding"/>
    <property type="match status" value="1"/>
</dbReference>
<dbReference type="SUPFAM" id="SSF47336">
    <property type="entry name" value="ACP-like"/>
    <property type="match status" value="1"/>
</dbReference>
<dbReference type="PROSITE" id="PS50075">
    <property type="entry name" value="CARRIER"/>
    <property type="match status" value="1"/>
</dbReference>
<dbReference type="PROSITE" id="PS00012">
    <property type="entry name" value="PHOSPHOPANTETHEINE"/>
    <property type="match status" value="1"/>
</dbReference>
<accession>Q5L0Q4</accession>
<proteinExistence type="inferred from homology"/>
<feature type="chain" id="PRO_1000066611" description="Acyl carrier protein">
    <location>
        <begin position="1"/>
        <end position="77"/>
    </location>
</feature>
<feature type="domain" description="Carrier" evidence="2">
    <location>
        <begin position="2"/>
        <end position="77"/>
    </location>
</feature>
<feature type="modified residue" description="O-(pantetheine 4'-phosphoryl)serine" evidence="2">
    <location>
        <position position="37"/>
    </location>
</feature>